<gene>
    <name type="ordered locus">SP70585_2002</name>
</gene>
<name>Y2002_STRP7</name>
<accession>C1C9J1</accession>
<organism>
    <name type="scientific">Streptococcus pneumoniae (strain 70585)</name>
    <dbReference type="NCBI Taxonomy" id="488221"/>
    <lineage>
        <taxon>Bacteria</taxon>
        <taxon>Bacillati</taxon>
        <taxon>Bacillota</taxon>
        <taxon>Bacilli</taxon>
        <taxon>Lactobacillales</taxon>
        <taxon>Streptococcaceae</taxon>
        <taxon>Streptococcus</taxon>
    </lineage>
</organism>
<protein>
    <recommendedName>
        <fullName evidence="1">Probable transcriptional regulatory protein SP70585_2002</fullName>
    </recommendedName>
</protein>
<comment type="subcellular location">
    <subcellularLocation>
        <location evidence="1">Cytoplasm</location>
    </subcellularLocation>
</comment>
<comment type="similarity">
    <text evidence="1">Belongs to the TACO1 family. YeeN subfamily.</text>
</comment>
<proteinExistence type="inferred from homology"/>
<evidence type="ECO:0000255" key="1">
    <source>
        <dbReference type="HAMAP-Rule" id="MF_00918"/>
    </source>
</evidence>
<sequence>MGRKWANIVAKKTAKDGANSKVYAKFGVEIYVAAKKGDPDPESNSALKFVIDRAKQAQVPKHIIDKAIDKAKGNTDETFTEGRYEGFGPNGSMLIVDTLTSNVNRTAANVRAAFGKNGGNMGASGSVSYLFDNKGVIVFGGEDADAVFEQLLEADVDVDDVEAQEGTITVYTAPTDLHKAIVALRESGIEEFQVTELEMIPQSEVELSGEDLETFEKLYSVLEDDEDVQKIYTNVDGF</sequence>
<reference key="1">
    <citation type="journal article" date="2010" name="Genome Biol.">
        <title>Structure and dynamics of the pan-genome of Streptococcus pneumoniae and closely related species.</title>
        <authorList>
            <person name="Donati C."/>
            <person name="Hiller N.L."/>
            <person name="Tettelin H."/>
            <person name="Muzzi A."/>
            <person name="Croucher N.J."/>
            <person name="Angiuoli S.V."/>
            <person name="Oggioni M."/>
            <person name="Dunning Hotopp J.C."/>
            <person name="Hu F.Z."/>
            <person name="Riley D.R."/>
            <person name="Covacci A."/>
            <person name="Mitchell T.J."/>
            <person name="Bentley S.D."/>
            <person name="Kilian M."/>
            <person name="Ehrlich G.D."/>
            <person name="Rappuoli R."/>
            <person name="Moxon E.R."/>
            <person name="Masignani V."/>
        </authorList>
    </citation>
    <scope>NUCLEOTIDE SEQUENCE [LARGE SCALE GENOMIC DNA]</scope>
    <source>
        <strain>70585</strain>
    </source>
</reference>
<keyword id="KW-0963">Cytoplasm</keyword>
<keyword id="KW-0238">DNA-binding</keyword>
<keyword id="KW-0804">Transcription</keyword>
<keyword id="KW-0805">Transcription regulation</keyword>
<feature type="chain" id="PRO_1000200111" description="Probable transcriptional regulatory protein SP70585_2002">
    <location>
        <begin position="1"/>
        <end position="238"/>
    </location>
</feature>
<dbReference type="EMBL" id="CP000918">
    <property type="protein sequence ID" value="ACO16266.1"/>
    <property type="molecule type" value="Genomic_DNA"/>
</dbReference>
<dbReference type="RefSeq" id="WP_000532876.1">
    <property type="nucleotide sequence ID" value="NC_012468.1"/>
</dbReference>
<dbReference type="SMR" id="C1C9J1"/>
<dbReference type="KEGG" id="snm:SP70585_2002"/>
<dbReference type="HOGENOM" id="CLU_062974_2_0_9"/>
<dbReference type="Proteomes" id="UP000002211">
    <property type="component" value="Chromosome"/>
</dbReference>
<dbReference type="GO" id="GO:0005829">
    <property type="term" value="C:cytosol"/>
    <property type="evidence" value="ECO:0007669"/>
    <property type="project" value="TreeGrafter"/>
</dbReference>
<dbReference type="GO" id="GO:0003677">
    <property type="term" value="F:DNA binding"/>
    <property type="evidence" value="ECO:0007669"/>
    <property type="project" value="UniProtKB-UniRule"/>
</dbReference>
<dbReference type="GO" id="GO:0006355">
    <property type="term" value="P:regulation of DNA-templated transcription"/>
    <property type="evidence" value="ECO:0007669"/>
    <property type="project" value="UniProtKB-UniRule"/>
</dbReference>
<dbReference type="FunFam" id="1.10.10.200:FF:000003">
    <property type="entry name" value="Probable transcriptional regulatory protein YeeN"/>
    <property type="match status" value="1"/>
</dbReference>
<dbReference type="FunFam" id="3.30.70.980:FF:000004">
    <property type="entry name" value="Probable transcriptional regulatory protein YeeN"/>
    <property type="match status" value="1"/>
</dbReference>
<dbReference type="Gene3D" id="1.10.10.200">
    <property type="match status" value="1"/>
</dbReference>
<dbReference type="Gene3D" id="3.30.70.980">
    <property type="match status" value="2"/>
</dbReference>
<dbReference type="HAMAP" id="MF_00693">
    <property type="entry name" value="Transcrip_reg_TACO1"/>
    <property type="match status" value="1"/>
</dbReference>
<dbReference type="HAMAP" id="MF_00918">
    <property type="entry name" value="Transcrip_reg_TACO1_YeeN"/>
    <property type="match status" value="1"/>
</dbReference>
<dbReference type="InterPro" id="IPR017856">
    <property type="entry name" value="Integrase-like_N"/>
</dbReference>
<dbReference type="InterPro" id="IPR048300">
    <property type="entry name" value="TACO1_YebC-like_2nd/3rd_dom"/>
</dbReference>
<dbReference type="InterPro" id="IPR049083">
    <property type="entry name" value="TACO1_YebC_N"/>
</dbReference>
<dbReference type="InterPro" id="IPR002876">
    <property type="entry name" value="Transcrip_reg_TACO1-like"/>
</dbReference>
<dbReference type="InterPro" id="IPR026564">
    <property type="entry name" value="Transcrip_reg_TACO1-like_dom3"/>
</dbReference>
<dbReference type="InterPro" id="IPR026562">
    <property type="entry name" value="Transcrip_reg_TACO1_YeeN"/>
</dbReference>
<dbReference type="InterPro" id="IPR029072">
    <property type="entry name" value="YebC-like"/>
</dbReference>
<dbReference type="NCBIfam" id="NF001030">
    <property type="entry name" value="PRK00110.1"/>
    <property type="match status" value="1"/>
</dbReference>
<dbReference type="NCBIfam" id="NF009044">
    <property type="entry name" value="PRK12378.1"/>
    <property type="match status" value="1"/>
</dbReference>
<dbReference type="NCBIfam" id="TIGR01033">
    <property type="entry name" value="YebC/PmpR family DNA-binding transcriptional regulator"/>
    <property type="match status" value="1"/>
</dbReference>
<dbReference type="PANTHER" id="PTHR12532">
    <property type="entry name" value="TRANSLATIONAL ACTIVATOR OF CYTOCHROME C OXIDASE 1"/>
    <property type="match status" value="1"/>
</dbReference>
<dbReference type="PANTHER" id="PTHR12532:SF0">
    <property type="entry name" value="TRANSLATIONAL ACTIVATOR OF CYTOCHROME C OXIDASE 1"/>
    <property type="match status" value="1"/>
</dbReference>
<dbReference type="Pfam" id="PF20772">
    <property type="entry name" value="TACO1_YebC_N"/>
    <property type="match status" value="1"/>
</dbReference>
<dbReference type="Pfam" id="PF01709">
    <property type="entry name" value="Transcrip_reg"/>
    <property type="match status" value="1"/>
</dbReference>
<dbReference type="SUPFAM" id="SSF75625">
    <property type="entry name" value="YebC-like"/>
    <property type="match status" value="1"/>
</dbReference>